<comment type="function">
    <text evidence="1">Catalyzes the transfer of endogenously produced octanoic acid from octanoyl-acyl-carrier-protein onto the lipoyl domains of lipoate-dependent enzymes. Lipoyl-ACP can also act as a substrate although octanoyl-ACP is likely to be the physiological substrate.</text>
</comment>
<comment type="catalytic activity">
    <reaction evidence="1">
        <text>octanoyl-[ACP] + L-lysyl-[protein] = N(6)-octanoyl-L-lysyl-[protein] + holo-[ACP] + H(+)</text>
        <dbReference type="Rhea" id="RHEA:17665"/>
        <dbReference type="Rhea" id="RHEA-COMP:9636"/>
        <dbReference type="Rhea" id="RHEA-COMP:9685"/>
        <dbReference type="Rhea" id="RHEA-COMP:9752"/>
        <dbReference type="Rhea" id="RHEA-COMP:9928"/>
        <dbReference type="ChEBI" id="CHEBI:15378"/>
        <dbReference type="ChEBI" id="CHEBI:29969"/>
        <dbReference type="ChEBI" id="CHEBI:64479"/>
        <dbReference type="ChEBI" id="CHEBI:78463"/>
        <dbReference type="ChEBI" id="CHEBI:78809"/>
        <dbReference type="EC" id="2.3.1.181"/>
    </reaction>
</comment>
<comment type="pathway">
    <text evidence="1">Protein modification; protein lipoylation via endogenous pathway; protein N(6)-(lipoyl)lysine from octanoyl-[acyl-carrier-protein]: step 1/2.</text>
</comment>
<comment type="subcellular location">
    <subcellularLocation>
        <location evidence="1">Cytoplasm</location>
    </subcellularLocation>
</comment>
<comment type="miscellaneous">
    <text evidence="1">In the reaction, the free carboxyl group of octanoic acid is attached via an amide linkage to the epsilon-amino group of a specific lysine residue of lipoyl domains of lipoate-dependent enzymes.</text>
</comment>
<comment type="similarity">
    <text evidence="1">Belongs to the LipB family.</text>
</comment>
<name>LIPB_NITV2</name>
<accession>Q72DM3</accession>
<evidence type="ECO:0000255" key="1">
    <source>
        <dbReference type="HAMAP-Rule" id="MF_00013"/>
    </source>
</evidence>
<evidence type="ECO:0000255" key="2">
    <source>
        <dbReference type="PROSITE-ProRule" id="PRU01067"/>
    </source>
</evidence>
<proteinExistence type="inferred from homology"/>
<gene>
    <name evidence="1" type="primary">lipB</name>
    <name type="ordered locus">DVU_0906</name>
</gene>
<organism>
    <name type="scientific">Nitratidesulfovibrio vulgaris (strain ATCC 29579 / DSM 644 / CCUG 34227 / NCIMB 8303 / VKM B-1760 / Hildenborough)</name>
    <name type="common">Desulfovibrio vulgaris</name>
    <dbReference type="NCBI Taxonomy" id="882"/>
    <lineage>
        <taxon>Bacteria</taxon>
        <taxon>Pseudomonadati</taxon>
        <taxon>Thermodesulfobacteriota</taxon>
        <taxon>Desulfovibrionia</taxon>
        <taxon>Desulfovibrionales</taxon>
        <taxon>Desulfovibrionaceae</taxon>
        <taxon>Nitratidesulfovibrio</taxon>
    </lineage>
</organism>
<protein>
    <recommendedName>
        <fullName evidence="1">Octanoyltransferase</fullName>
        <ecNumber evidence="1">2.3.1.181</ecNumber>
    </recommendedName>
    <alternativeName>
        <fullName evidence="1">Lipoate-protein ligase B</fullName>
    </alternativeName>
    <alternativeName>
        <fullName evidence="1">Lipoyl/octanoyl transferase</fullName>
    </alternativeName>
    <alternativeName>
        <fullName evidence="1">Octanoyl-[acyl-carrier-protein]-protein N-octanoyltransferase</fullName>
    </alternativeName>
</protein>
<keyword id="KW-0012">Acyltransferase</keyword>
<keyword id="KW-0963">Cytoplasm</keyword>
<keyword id="KW-1185">Reference proteome</keyword>
<keyword id="KW-0808">Transferase</keyword>
<reference key="1">
    <citation type="journal article" date="2004" name="Nat. Biotechnol.">
        <title>The genome sequence of the anaerobic, sulfate-reducing bacterium Desulfovibrio vulgaris Hildenborough.</title>
        <authorList>
            <person name="Heidelberg J.F."/>
            <person name="Seshadri R."/>
            <person name="Haveman S.A."/>
            <person name="Hemme C.L."/>
            <person name="Paulsen I.T."/>
            <person name="Kolonay J.F."/>
            <person name="Eisen J.A."/>
            <person name="Ward N.L."/>
            <person name="Methe B.A."/>
            <person name="Brinkac L.M."/>
            <person name="Daugherty S.C."/>
            <person name="DeBoy R.T."/>
            <person name="Dodson R.J."/>
            <person name="Durkin A.S."/>
            <person name="Madupu R."/>
            <person name="Nelson W.C."/>
            <person name="Sullivan S.A."/>
            <person name="Fouts D.E."/>
            <person name="Haft D.H."/>
            <person name="Selengut J."/>
            <person name="Peterson J.D."/>
            <person name="Davidsen T.M."/>
            <person name="Zafar N."/>
            <person name="Zhou L."/>
            <person name="Radune D."/>
            <person name="Dimitrov G."/>
            <person name="Hance M."/>
            <person name="Tran K."/>
            <person name="Khouri H.M."/>
            <person name="Gill J."/>
            <person name="Utterback T.R."/>
            <person name="Feldblyum T.V."/>
            <person name="Wall J.D."/>
            <person name="Voordouw G."/>
            <person name="Fraser C.M."/>
        </authorList>
    </citation>
    <scope>NUCLEOTIDE SEQUENCE [LARGE SCALE GENOMIC DNA]</scope>
    <source>
        <strain>ATCC 29579 / DSM 644 / CCUG 34227 / NCIMB 8303 / VKM B-1760 / Hildenborough</strain>
    </source>
</reference>
<sequence length="218" mass="23826">MLTIDLGSLSYAEAEAVQTARLGEVSTGGEDTLYLVEHPPVITLGRNGGIENLHAGRGFLAERGIELAQSSRGGNITCHFPGQLVAYPVFRIERRPGGLRSFFHDLEEVVLRTLHTFGLEASRHEGRPGVWIDNRKICSIGVAVRRWTTYHGLALNVGRDLSLFNLITLCGLPDAEATSLHRELDDDSVTMQEVKDVLTRQFLAIFTHPAVAAGEAAL</sequence>
<dbReference type="EC" id="2.3.1.181" evidence="1"/>
<dbReference type="EMBL" id="AE017285">
    <property type="protein sequence ID" value="AAS95386.1"/>
    <property type="molecule type" value="Genomic_DNA"/>
</dbReference>
<dbReference type="RefSeq" id="WP_010938205.1">
    <property type="nucleotide sequence ID" value="NC_002937.3"/>
</dbReference>
<dbReference type="RefSeq" id="YP_010127.1">
    <property type="nucleotide sequence ID" value="NC_002937.3"/>
</dbReference>
<dbReference type="SMR" id="Q72DM3"/>
<dbReference type="STRING" id="882.DVU_0906"/>
<dbReference type="PaxDb" id="882-DVU_0906"/>
<dbReference type="EnsemblBacteria" id="AAS95386">
    <property type="protein sequence ID" value="AAS95386"/>
    <property type="gene ID" value="DVU_0906"/>
</dbReference>
<dbReference type="KEGG" id="dvu:DVU_0906"/>
<dbReference type="PATRIC" id="fig|882.5.peg.850"/>
<dbReference type="eggNOG" id="COG0321">
    <property type="taxonomic scope" value="Bacteria"/>
</dbReference>
<dbReference type="HOGENOM" id="CLU_035168_1_3_7"/>
<dbReference type="OrthoDB" id="9787061at2"/>
<dbReference type="PhylomeDB" id="Q72DM3"/>
<dbReference type="UniPathway" id="UPA00538">
    <property type="reaction ID" value="UER00592"/>
</dbReference>
<dbReference type="Proteomes" id="UP000002194">
    <property type="component" value="Chromosome"/>
</dbReference>
<dbReference type="GO" id="GO:0005737">
    <property type="term" value="C:cytoplasm"/>
    <property type="evidence" value="ECO:0007669"/>
    <property type="project" value="UniProtKB-SubCell"/>
</dbReference>
<dbReference type="GO" id="GO:0033819">
    <property type="term" value="F:lipoyl(octanoyl) transferase activity"/>
    <property type="evidence" value="ECO:0007669"/>
    <property type="project" value="UniProtKB-EC"/>
</dbReference>
<dbReference type="GO" id="GO:0036211">
    <property type="term" value="P:protein modification process"/>
    <property type="evidence" value="ECO:0007669"/>
    <property type="project" value="InterPro"/>
</dbReference>
<dbReference type="CDD" id="cd16444">
    <property type="entry name" value="LipB"/>
    <property type="match status" value="1"/>
</dbReference>
<dbReference type="Gene3D" id="3.30.930.10">
    <property type="entry name" value="Bira Bifunctional Protein, Domain 2"/>
    <property type="match status" value="1"/>
</dbReference>
<dbReference type="HAMAP" id="MF_00013">
    <property type="entry name" value="LipB"/>
    <property type="match status" value="1"/>
</dbReference>
<dbReference type="InterPro" id="IPR045864">
    <property type="entry name" value="aa-tRNA-synth_II/BPL/LPL"/>
</dbReference>
<dbReference type="InterPro" id="IPR004143">
    <property type="entry name" value="BPL_LPL_catalytic"/>
</dbReference>
<dbReference type="InterPro" id="IPR000544">
    <property type="entry name" value="Octanoyltransferase"/>
</dbReference>
<dbReference type="InterPro" id="IPR020605">
    <property type="entry name" value="Octanoyltransferase_CS"/>
</dbReference>
<dbReference type="NCBIfam" id="TIGR00214">
    <property type="entry name" value="lipB"/>
    <property type="match status" value="1"/>
</dbReference>
<dbReference type="PANTHER" id="PTHR10993:SF7">
    <property type="entry name" value="LIPOYLTRANSFERASE 2, MITOCHONDRIAL-RELATED"/>
    <property type="match status" value="1"/>
</dbReference>
<dbReference type="PANTHER" id="PTHR10993">
    <property type="entry name" value="OCTANOYLTRANSFERASE"/>
    <property type="match status" value="1"/>
</dbReference>
<dbReference type="Pfam" id="PF21948">
    <property type="entry name" value="LplA-B_cat"/>
    <property type="match status" value="1"/>
</dbReference>
<dbReference type="PIRSF" id="PIRSF016262">
    <property type="entry name" value="LPLase"/>
    <property type="match status" value="1"/>
</dbReference>
<dbReference type="SUPFAM" id="SSF55681">
    <property type="entry name" value="Class II aaRS and biotin synthetases"/>
    <property type="match status" value="1"/>
</dbReference>
<dbReference type="PROSITE" id="PS51733">
    <property type="entry name" value="BPL_LPL_CATALYTIC"/>
    <property type="match status" value="1"/>
</dbReference>
<dbReference type="PROSITE" id="PS01313">
    <property type="entry name" value="LIPB"/>
    <property type="match status" value="1"/>
</dbReference>
<feature type="chain" id="PRO_0000062833" description="Octanoyltransferase">
    <location>
        <begin position="1"/>
        <end position="218"/>
    </location>
</feature>
<feature type="domain" description="BPL/LPL catalytic" evidence="2">
    <location>
        <begin position="27"/>
        <end position="210"/>
    </location>
</feature>
<feature type="active site" description="Acyl-thioester intermediate" evidence="1">
    <location>
        <position position="170"/>
    </location>
</feature>
<feature type="binding site" evidence="1">
    <location>
        <begin position="72"/>
        <end position="79"/>
    </location>
    <ligand>
        <name>substrate</name>
    </ligand>
</feature>
<feature type="binding site" evidence="1">
    <location>
        <begin position="139"/>
        <end position="141"/>
    </location>
    <ligand>
        <name>substrate</name>
    </ligand>
</feature>
<feature type="binding site" evidence="1">
    <location>
        <begin position="152"/>
        <end position="154"/>
    </location>
    <ligand>
        <name>substrate</name>
    </ligand>
</feature>
<feature type="site" description="Lowers pKa of active site Cys" evidence="1">
    <location>
        <position position="136"/>
    </location>
</feature>